<gene>
    <name evidence="1" type="primary">psb30</name>
    <name evidence="1" type="synonym">ycf12</name>
    <name type="ordered locus">Heak293_Cp091</name>
</gene>
<organism>
    <name type="scientific">Heterosigma akashiwo (strain NIES-293 / 8280G21-1)</name>
    <dbReference type="NCBI Taxonomy" id="536047"/>
    <lineage>
        <taxon>Eukaryota</taxon>
        <taxon>Sar</taxon>
        <taxon>Stramenopiles</taxon>
        <taxon>Ochrophyta</taxon>
        <taxon>Raphidophyceae</taxon>
        <taxon>Chattonellales</taxon>
        <taxon>Chattonellaceae</taxon>
        <taxon>Heterosigma</taxon>
    </lineage>
</organism>
<sequence>MVNWQVIGQLLSATLIVLAGPAVIFVLAFKKGNL</sequence>
<feature type="chain" id="PRO_0000365276" description="Photosystem II reaction center protein Psb30">
    <location>
        <begin position="1"/>
        <end position="34"/>
    </location>
</feature>
<feature type="transmembrane region" description="Helical" evidence="1">
    <location>
        <begin position="6"/>
        <end position="26"/>
    </location>
</feature>
<comment type="function">
    <text evidence="1">A core subunit of photosystem II (PSII), probably helps stabilize the reaction center.</text>
</comment>
<comment type="subunit">
    <text evidence="1">PSII is composed of 1 copy each of membrane proteins PsbA, PsbB, PsbC, PsbD, PsbE, PsbF, PsbH, PsbI, PsbJ, PsbK, PsbL, PsbM, PsbT, PsbX, PsbY, PsbZ, Psb30/Ycf12, peripheral proteins of the oxygen-evolving complex and a large number of cofactors. It forms dimeric complexes.</text>
</comment>
<comment type="subcellular location">
    <subcellularLocation>
        <location evidence="1">Plastid</location>
        <location evidence="1">Chloroplast thylakoid membrane</location>
        <topology evidence="1">Single-pass membrane protein</topology>
    </subcellularLocation>
</comment>
<comment type="similarity">
    <text evidence="1">Belongs to the Psb30/Ycf12 family.</text>
</comment>
<proteinExistence type="inferred from homology"/>
<protein>
    <recommendedName>
        <fullName evidence="1">Photosystem II reaction center protein Psb30</fullName>
    </recommendedName>
    <alternativeName>
        <fullName evidence="1">Photosystem II reaction center protein Ycf12</fullName>
    </alternativeName>
</protein>
<evidence type="ECO:0000255" key="1">
    <source>
        <dbReference type="HAMAP-Rule" id="MF_01329"/>
    </source>
</evidence>
<geneLocation type="chloroplast"/>
<reference key="1">
    <citation type="journal article" date="2008" name="BMC Genomics">
        <title>Chloroplast genome sequencing analysis of Heterosigma akashiwo CCMP452 (West Atlantic) and NIES293 (West Pacific) strains.</title>
        <authorList>
            <person name="Cattolico R.A."/>
            <person name="Jacobs M.A."/>
            <person name="Zhou Y."/>
            <person name="Chang J."/>
            <person name="Duplessis M."/>
            <person name="Lybrand T."/>
            <person name="McKay J."/>
            <person name="Ong H.C."/>
            <person name="Sims E."/>
            <person name="Rocap G."/>
        </authorList>
    </citation>
    <scope>NUCLEOTIDE SEQUENCE [LARGE SCALE GENOMIC DNA]</scope>
</reference>
<accession>B2XTA0</accession>
<name>PSB30_HETA2</name>
<dbReference type="EMBL" id="EU168190">
    <property type="protein sequence ID" value="ABV65998.1"/>
    <property type="molecule type" value="Genomic_DNA"/>
</dbReference>
<dbReference type="RefSeq" id="YP_001936392.1">
    <property type="nucleotide sequence ID" value="NC_010772.1"/>
</dbReference>
<dbReference type="SMR" id="B2XTA0"/>
<dbReference type="GeneID" id="6335714"/>
<dbReference type="GO" id="GO:0009535">
    <property type="term" value="C:chloroplast thylakoid membrane"/>
    <property type="evidence" value="ECO:0007669"/>
    <property type="project" value="UniProtKB-SubCell"/>
</dbReference>
<dbReference type="GO" id="GO:0009523">
    <property type="term" value="C:photosystem II"/>
    <property type="evidence" value="ECO:0007669"/>
    <property type="project" value="UniProtKB-KW"/>
</dbReference>
<dbReference type="GO" id="GO:0015979">
    <property type="term" value="P:photosynthesis"/>
    <property type="evidence" value="ECO:0007669"/>
    <property type="project" value="UniProtKB-KW"/>
</dbReference>
<dbReference type="HAMAP" id="MF_01329">
    <property type="entry name" value="PSII_Psb30_Ycf12"/>
    <property type="match status" value="1"/>
</dbReference>
<dbReference type="InterPro" id="IPR010284">
    <property type="entry name" value="PSII_Ycf12_core-subunit"/>
</dbReference>
<dbReference type="NCBIfam" id="NF010239">
    <property type="entry name" value="PRK13686.1"/>
    <property type="match status" value="1"/>
</dbReference>
<dbReference type="Pfam" id="PF05969">
    <property type="entry name" value="PSII_Ycf12"/>
    <property type="match status" value="1"/>
</dbReference>
<keyword id="KW-0150">Chloroplast</keyword>
<keyword id="KW-0472">Membrane</keyword>
<keyword id="KW-0602">Photosynthesis</keyword>
<keyword id="KW-0604">Photosystem II</keyword>
<keyword id="KW-0934">Plastid</keyword>
<keyword id="KW-0793">Thylakoid</keyword>
<keyword id="KW-0812">Transmembrane</keyword>
<keyword id="KW-1133">Transmembrane helix</keyword>